<reference key="1">
    <citation type="submission" date="2005-08" db="EMBL/GenBank/DDBJ databases">
        <authorList>
            <consortium name="NIH - Mammalian Gene Collection (MGC) project"/>
        </authorList>
    </citation>
    <scope>NUCLEOTIDE SEQUENCE [LARGE SCALE MRNA]</scope>
    <source>
        <strain>Crossbred X Angus</strain>
        <tissue>Liver</tissue>
    </source>
</reference>
<proteinExistence type="evidence at transcript level"/>
<sequence>MADPALFEFLHTEMVAELWAQDPDPGPGGQKTSLLVLEGMGFRVGQALGERLPRETLTFREELDILKFLCKDLWVAVFHKQMDSLRTNHQGTYVLQDNSFPLLVRMASGLQYLEEAPKFLAFTCGLLRGTLSTLGVKSLVTASVAALPACKFQVVIQKL</sequence>
<organism>
    <name type="scientific">Bos taurus</name>
    <name type="common">Bovine</name>
    <dbReference type="NCBI Taxonomy" id="9913"/>
    <lineage>
        <taxon>Eukaryota</taxon>
        <taxon>Metazoa</taxon>
        <taxon>Chordata</taxon>
        <taxon>Craniata</taxon>
        <taxon>Vertebrata</taxon>
        <taxon>Euteleostomi</taxon>
        <taxon>Mammalia</taxon>
        <taxon>Eutheria</taxon>
        <taxon>Laurasiatheria</taxon>
        <taxon>Artiodactyla</taxon>
        <taxon>Ruminantia</taxon>
        <taxon>Pecora</taxon>
        <taxon>Bovidae</taxon>
        <taxon>Bovinae</taxon>
        <taxon>Bos</taxon>
    </lineage>
</organism>
<evidence type="ECO:0000250" key="1"/>
<evidence type="ECO:0000250" key="2">
    <source>
        <dbReference type="UniProtKB" id="O75865"/>
    </source>
</evidence>
<evidence type="ECO:0000250" key="3">
    <source>
        <dbReference type="UniProtKB" id="Q78XR0"/>
    </source>
</evidence>
<evidence type="ECO:0000305" key="4"/>
<comment type="function">
    <text evidence="3">May play a role in vesicular transport during the biogenesis of melanosomes.</text>
</comment>
<comment type="subunit">
    <text evidence="2">Part of the multisubunit transport protein particle (TRAPP) complex. Heterodimer with TRAPPC3 (By similarity). The heterodimer TRAPPC3-TRAPPC6A interacts with TRAPPC2L. Interacts with TRAPPC2L (By similarity).</text>
</comment>
<comment type="subcellular location">
    <subcellularLocation>
        <location evidence="1">Golgi apparatus</location>
        <location evidence="1">cis-Golgi network</location>
    </subcellularLocation>
    <subcellularLocation>
        <location evidence="1">Endoplasmic reticulum</location>
    </subcellularLocation>
</comment>
<comment type="similarity">
    <text evidence="4">Belongs to the TRAPP small subunits family. BET3 subfamily.</text>
</comment>
<feature type="chain" id="PRO_0000244538" description="Trafficking protein particle complex subunit 6A">
    <location>
        <begin position="1"/>
        <end position="159"/>
    </location>
</feature>
<feature type="modified residue" description="Phosphoserine" evidence="3">
    <location>
        <position position="33"/>
    </location>
</feature>
<keyword id="KW-0256">Endoplasmic reticulum</keyword>
<keyword id="KW-0931">ER-Golgi transport</keyword>
<keyword id="KW-0333">Golgi apparatus</keyword>
<keyword id="KW-0597">Phosphoprotein</keyword>
<keyword id="KW-1185">Reference proteome</keyword>
<keyword id="KW-0813">Transport</keyword>
<name>TPC6A_BOVIN</name>
<gene>
    <name evidence="2" type="primary">TRAPPC6A</name>
</gene>
<dbReference type="EMBL" id="BC102525">
    <property type="protein sequence ID" value="AAI02526.1"/>
    <property type="molecule type" value="mRNA"/>
</dbReference>
<dbReference type="RefSeq" id="NP_001029592.1">
    <property type="nucleotide sequence ID" value="NM_001034420.2"/>
</dbReference>
<dbReference type="SMR" id="Q3T086"/>
<dbReference type="FunCoup" id="Q3T086">
    <property type="interactions" value="859"/>
</dbReference>
<dbReference type="STRING" id="9913.ENSBTAP00000009288"/>
<dbReference type="PaxDb" id="9913-ENSBTAP00000009288"/>
<dbReference type="GeneID" id="512261"/>
<dbReference type="KEGG" id="bta:512261"/>
<dbReference type="CTD" id="79090"/>
<dbReference type="VEuPathDB" id="HostDB:ENSBTAG00000007065"/>
<dbReference type="eggNOG" id="KOG3316">
    <property type="taxonomic scope" value="Eukaryota"/>
</dbReference>
<dbReference type="HOGENOM" id="CLU_076409_3_1_1"/>
<dbReference type="InParanoid" id="Q3T086"/>
<dbReference type="OMA" id="PACELHY"/>
<dbReference type="OrthoDB" id="941624at2759"/>
<dbReference type="TreeFam" id="TF313010"/>
<dbReference type="Reactome" id="R-BTA-204005">
    <property type="pathway name" value="COPII-mediated vesicle transport"/>
</dbReference>
<dbReference type="Reactome" id="R-BTA-8876198">
    <property type="pathway name" value="RAB GEFs exchange GTP for GDP on RABs"/>
</dbReference>
<dbReference type="Proteomes" id="UP000009136">
    <property type="component" value="Chromosome 18"/>
</dbReference>
<dbReference type="Bgee" id="ENSBTAG00000007065">
    <property type="expression patterns" value="Expressed in olfactory segment of nasal mucosa and 105 other cell types or tissues"/>
</dbReference>
<dbReference type="GO" id="GO:0005801">
    <property type="term" value="C:cis-Golgi network"/>
    <property type="evidence" value="ECO:0000318"/>
    <property type="project" value="GO_Central"/>
</dbReference>
<dbReference type="GO" id="GO:0005783">
    <property type="term" value="C:endoplasmic reticulum"/>
    <property type="evidence" value="ECO:0007669"/>
    <property type="project" value="UniProtKB-SubCell"/>
</dbReference>
<dbReference type="GO" id="GO:0005802">
    <property type="term" value="C:trans-Golgi network"/>
    <property type="evidence" value="ECO:0000318"/>
    <property type="project" value="GO_Central"/>
</dbReference>
<dbReference type="GO" id="GO:0030008">
    <property type="term" value="C:TRAPP complex"/>
    <property type="evidence" value="ECO:0000318"/>
    <property type="project" value="GO_Central"/>
</dbReference>
<dbReference type="GO" id="GO:0006888">
    <property type="term" value="P:endoplasmic reticulum to Golgi vesicle-mediated transport"/>
    <property type="evidence" value="ECO:0000318"/>
    <property type="project" value="GO_Central"/>
</dbReference>
<dbReference type="CDD" id="cd14944">
    <property type="entry name" value="TRAPPC6A_Trs33"/>
    <property type="match status" value="1"/>
</dbReference>
<dbReference type="FunFam" id="3.30.1380.20:FF:000009">
    <property type="entry name" value="Trafficking protein particle complex subunit 6A"/>
    <property type="match status" value="1"/>
</dbReference>
<dbReference type="Gene3D" id="3.30.1380.20">
    <property type="entry name" value="Trafficking protein particle complex subunit 3"/>
    <property type="match status" value="1"/>
</dbReference>
<dbReference type="InterPro" id="IPR024096">
    <property type="entry name" value="NO_sig/Golgi_transp_ligand-bd"/>
</dbReference>
<dbReference type="InterPro" id="IPR007194">
    <property type="entry name" value="TRAPP_component"/>
</dbReference>
<dbReference type="InterPro" id="IPR037992">
    <property type="entry name" value="TRAPPC6/Trs33"/>
</dbReference>
<dbReference type="PANTHER" id="PTHR12817:SF2">
    <property type="entry name" value="TRAFFICKING PROTEIN PARTICLE COMPLEX SUBUNIT 6A"/>
    <property type="match status" value="1"/>
</dbReference>
<dbReference type="PANTHER" id="PTHR12817">
    <property type="entry name" value="TRAFFICKING PROTEIN PARTICLE COMPLEX SUBUNIT 6B"/>
    <property type="match status" value="1"/>
</dbReference>
<dbReference type="Pfam" id="PF04051">
    <property type="entry name" value="TRAPP"/>
    <property type="match status" value="1"/>
</dbReference>
<dbReference type="SUPFAM" id="SSF111126">
    <property type="entry name" value="Ligand-binding domain in the NO signalling and Golgi transport"/>
    <property type="match status" value="1"/>
</dbReference>
<protein>
    <recommendedName>
        <fullName evidence="2">Trafficking protein particle complex subunit 6A</fullName>
        <shortName>TRAPP complex subunit 6A</shortName>
    </recommendedName>
</protein>
<accession>Q3T086</accession>